<feature type="initiator methionine" description="Removed" evidence="1">
    <location>
        <position position="1"/>
    </location>
</feature>
<feature type="chain" id="PRO_0000245457" description="Histone H2B.1">
    <location>
        <begin position="2"/>
        <end position="130"/>
    </location>
</feature>
<feature type="region of interest" description="Disordered" evidence="2">
    <location>
        <begin position="1"/>
        <end position="39"/>
    </location>
</feature>
<feature type="compositionally biased region" description="Basic and acidic residues" evidence="2">
    <location>
        <begin position="1"/>
        <end position="19"/>
    </location>
</feature>
<feature type="modified residue" description="N6-acetyllysine; alternate" evidence="1">
    <location>
        <position position="7"/>
    </location>
</feature>
<feature type="modified residue" description="N6-acetyllysine; alternate" evidence="1">
    <location>
        <position position="8"/>
    </location>
</feature>
<feature type="modified residue" description="Phosphoserine" evidence="1">
    <location>
        <position position="11"/>
    </location>
</feature>
<feature type="modified residue" description="N6-acetyllysine" evidence="1">
    <location>
        <position position="12"/>
    </location>
</feature>
<feature type="modified residue" description="N6-acetyllysine; alternate" evidence="1">
    <location>
        <position position="17"/>
    </location>
</feature>
<feature type="cross-link" description="Glycyl lysine isopeptide (Lys-Gly) (interchain with G-Cter in SUMO); alternate" evidence="1">
    <location>
        <position position="7"/>
    </location>
</feature>
<feature type="cross-link" description="Glycyl lysine isopeptide (Lys-Gly) (interchain with G-Cter in SUMO); alternate" evidence="1">
    <location>
        <position position="8"/>
    </location>
</feature>
<feature type="cross-link" description="Glycyl lysine isopeptide (Lys-Gly) (interchain with G-Cter in SUMO); alternate" evidence="1">
    <location>
        <position position="17"/>
    </location>
</feature>
<feature type="cross-link" description="Glycyl lysine isopeptide (Lys-Gly) (interchain with G-Cter in SUMO)" evidence="1">
    <location>
        <position position="18"/>
    </location>
</feature>
<feature type="cross-link" description="Glycyl lysine isopeptide (Lys-Gly) (interchain with G-Cter in ubiquitin)" evidence="1">
    <location>
        <position position="124"/>
    </location>
</feature>
<protein>
    <recommendedName>
        <fullName>Histone H2B.1</fullName>
    </recommendedName>
</protein>
<name>H2B1_DEBHA</name>
<evidence type="ECO:0000250" key="1"/>
<evidence type="ECO:0000256" key="2">
    <source>
        <dbReference type="SAM" id="MobiDB-lite"/>
    </source>
</evidence>
<evidence type="ECO:0000305" key="3"/>
<organism>
    <name type="scientific">Debaryomyces hansenii (strain ATCC 36239 / CBS 767 / BCRC 21394 / JCM 1990 / NBRC 0083 / IGC 2968)</name>
    <name type="common">Yeast</name>
    <name type="synonym">Torulaspora hansenii</name>
    <dbReference type="NCBI Taxonomy" id="284592"/>
    <lineage>
        <taxon>Eukaryota</taxon>
        <taxon>Fungi</taxon>
        <taxon>Dikarya</taxon>
        <taxon>Ascomycota</taxon>
        <taxon>Saccharomycotina</taxon>
        <taxon>Pichiomycetes</taxon>
        <taxon>Debaryomycetaceae</taxon>
        <taxon>Debaryomyces</taxon>
    </lineage>
</organism>
<accession>Q6BRG2</accession>
<proteinExistence type="inferred from homology"/>
<keyword id="KW-0007">Acetylation</keyword>
<keyword id="KW-0158">Chromosome</keyword>
<keyword id="KW-0238">DNA-binding</keyword>
<keyword id="KW-1017">Isopeptide bond</keyword>
<keyword id="KW-0544">Nucleosome core</keyword>
<keyword id="KW-0539">Nucleus</keyword>
<keyword id="KW-0597">Phosphoprotein</keyword>
<keyword id="KW-1185">Reference proteome</keyword>
<keyword id="KW-0832">Ubl conjugation</keyword>
<comment type="function">
    <text>Core component of nucleosome. Nucleosomes wrap and compact DNA into chromatin, limiting DNA accessibility to the cellular machineries which require DNA as a template. Histones thereby play a central role in transcription regulation, DNA repair, DNA replication and chromosomal stability. DNA accessibility is regulated via a complex set of post-translational modifications of histones, also called histone code, and nucleosome remodeling.</text>
</comment>
<comment type="subunit">
    <text>The nucleosome is a histone octamer containing two molecules each of H2A, H2B, H3 and H4 assembled in one H3-H4 heterotetramer and two H2A-H2B heterodimers. The octamer wraps approximately 147 bp of DNA.</text>
</comment>
<comment type="subcellular location">
    <subcellularLocation>
        <location evidence="1">Nucleus</location>
    </subcellularLocation>
    <subcellularLocation>
        <location evidence="1">Chromosome</location>
    </subcellularLocation>
</comment>
<comment type="PTM">
    <text evidence="1">Monoubiquitinated by the UBC2-BRE1 complex to form H2BK123ub1. H2BK123ub1 gives a specific tag for epigenetic transcriptional activation and is also prerequisite for H3K4me and H3K79me formation. H2BK123ub1 also modulates the formation of double-strand breaks during meiosis and is a prerequisite for DNA-damage checkpoint activation (By similarity).</text>
</comment>
<comment type="PTM">
    <text evidence="1">Phosphorylated by STE20 to form H2BS10ph during progression through meiotic prophase. May be correlated with chromosome condensation (By similarity).</text>
</comment>
<comment type="PTM">
    <text evidence="1">Acetylated by GCN5 to form H2BK11ac and H2BK16ac. H2BK16ac can also be formed by ESA1. Acetylation of N-terminal lysines and particularly formation of H2BK11acK16ac has a positive effect on transcription (By similarity).</text>
</comment>
<comment type="PTM">
    <text evidence="1">Sumoylation to form H2BK6su or H2BK7su, and probably also H2BK16su or H2BK17su, occurs preferentially near the telomeres and represses gene transcription.</text>
</comment>
<comment type="similarity">
    <text evidence="3">Belongs to the histone H2B family.</text>
</comment>
<comment type="caution">
    <text evidence="3">To ensure consistency between histone entries, we follow the 'Brno' nomenclature for histone modifications, with positions referring to those used in the literature for the 'closest' model organism. Due to slight variations in histone sequences between organisms and to the presence of initiator methionine in UniProtKB/Swiss-Prot sequences, the actual positions of modified amino acids in the sequence generally differ. In this entry the following conventions are used: H2BK6ac = acetylated Lys-7; H2BK6su = sumoylated Lys-7; H2BK7ac = acetylated Lys-8; H2BK7su = sumoylated Lys-8; H2BS10ph = phosphorylated Ser-11; H2BK11ac = acetylated Lys-12; H2BK16ac = acetylated Lys-17; H2BK16su = sumoylated Lys-17; H2BK17su = sumoylated Lys-18; H2BK123ub1 = monoubiquitinated Lys-124.</text>
</comment>
<reference key="1">
    <citation type="journal article" date="2004" name="Nature">
        <title>Genome evolution in yeasts.</title>
        <authorList>
            <person name="Dujon B."/>
            <person name="Sherman D."/>
            <person name="Fischer G."/>
            <person name="Durrens P."/>
            <person name="Casaregola S."/>
            <person name="Lafontaine I."/>
            <person name="de Montigny J."/>
            <person name="Marck C."/>
            <person name="Neuveglise C."/>
            <person name="Talla E."/>
            <person name="Goffard N."/>
            <person name="Frangeul L."/>
            <person name="Aigle M."/>
            <person name="Anthouard V."/>
            <person name="Babour A."/>
            <person name="Barbe V."/>
            <person name="Barnay S."/>
            <person name="Blanchin S."/>
            <person name="Beckerich J.-M."/>
            <person name="Beyne E."/>
            <person name="Bleykasten C."/>
            <person name="Boisrame A."/>
            <person name="Boyer J."/>
            <person name="Cattolico L."/>
            <person name="Confanioleri F."/>
            <person name="de Daruvar A."/>
            <person name="Despons L."/>
            <person name="Fabre E."/>
            <person name="Fairhead C."/>
            <person name="Ferry-Dumazet H."/>
            <person name="Groppi A."/>
            <person name="Hantraye F."/>
            <person name="Hennequin C."/>
            <person name="Jauniaux N."/>
            <person name="Joyet P."/>
            <person name="Kachouri R."/>
            <person name="Kerrest A."/>
            <person name="Koszul R."/>
            <person name="Lemaire M."/>
            <person name="Lesur I."/>
            <person name="Ma L."/>
            <person name="Muller H."/>
            <person name="Nicaud J.-M."/>
            <person name="Nikolski M."/>
            <person name="Oztas S."/>
            <person name="Ozier-Kalogeropoulos O."/>
            <person name="Pellenz S."/>
            <person name="Potier S."/>
            <person name="Richard G.-F."/>
            <person name="Straub M.-L."/>
            <person name="Suleau A."/>
            <person name="Swennen D."/>
            <person name="Tekaia F."/>
            <person name="Wesolowski-Louvel M."/>
            <person name="Westhof E."/>
            <person name="Wirth B."/>
            <person name="Zeniou-Meyer M."/>
            <person name="Zivanovic Y."/>
            <person name="Bolotin-Fukuhara M."/>
            <person name="Thierry A."/>
            <person name="Bouchier C."/>
            <person name="Caudron B."/>
            <person name="Scarpelli C."/>
            <person name="Gaillardin C."/>
            <person name="Weissenbach J."/>
            <person name="Wincker P."/>
            <person name="Souciet J.-L."/>
        </authorList>
    </citation>
    <scope>NUCLEOTIDE SEQUENCE [LARGE SCALE GENOMIC DNA]</scope>
    <source>
        <strain>ATCC 36239 / CBS 767 / BCRC 21394 / JCM 1990 / NBRC 0083 / IGC 2968</strain>
    </source>
</reference>
<gene>
    <name type="primary">HTB1</name>
    <name type="ordered locus">DEHA2D16610g</name>
</gene>
<sequence>MAPKAEKKPASKAPAEKKPAAKKTASATGTKKRSKTRKETYSSYIYKVLKQTHPDTGISQKAMSIMNSFVNDIFERIAGEASKLAAYNKKSTISAREIQTAVRLILPGELAKHAVSEGTRAVTKYSSAAN</sequence>
<dbReference type="EMBL" id="CR382136">
    <property type="protein sequence ID" value="CAG87379.1"/>
    <property type="molecule type" value="Genomic_DNA"/>
</dbReference>
<dbReference type="RefSeq" id="XP_459208.1">
    <property type="nucleotide sequence ID" value="XM_459208.1"/>
</dbReference>
<dbReference type="SMR" id="Q6BRG2"/>
<dbReference type="FunCoup" id="Q6BRG2">
    <property type="interactions" value="1211"/>
</dbReference>
<dbReference type="STRING" id="284592.Q6BRG2"/>
<dbReference type="GeneID" id="2901193"/>
<dbReference type="KEGG" id="dha:DEHA2D16610g"/>
<dbReference type="eggNOG" id="KOG1744">
    <property type="taxonomic scope" value="Eukaryota"/>
</dbReference>
<dbReference type="HOGENOM" id="CLU_075666_1_3_1"/>
<dbReference type="InParanoid" id="Q6BRG2"/>
<dbReference type="OMA" id="FCPFAIR"/>
<dbReference type="OrthoDB" id="10254238at2759"/>
<dbReference type="Proteomes" id="UP000000599">
    <property type="component" value="Chromosome D"/>
</dbReference>
<dbReference type="GO" id="GO:0000786">
    <property type="term" value="C:nucleosome"/>
    <property type="evidence" value="ECO:0007669"/>
    <property type="project" value="UniProtKB-KW"/>
</dbReference>
<dbReference type="GO" id="GO:0005634">
    <property type="term" value="C:nucleus"/>
    <property type="evidence" value="ECO:0007669"/>
    <property type="project" value="UniProtKB-SubCell"/>
</dbReference>
<dbReference type="GO" id="GO:0003677">
    <property type="term" value="F:DNA binding"/>
    <property type="evidence" value="ECO:0007669"/>
    <property type="project" value="UniProtKB-KW"/>
</dbReference>
<dbReference type="GO" id="GO:0046982">
    <property type="term" value="F:protein heterodimerization activity"/>
    <property type="evidence" value="ECO:0007669"/>
    <property type="project" value="InterPro"/>
</dbReference>
<dbReference type="GO" id="GO:0030527">
    <property type="term" value="F:structural constituent of chromatin"/>
    <property type="evidence" value="ECO:0007669"/>
    <property type="project" value="InterPro"/>
</dbReference>
<dbReference type="CDD" id="cd22910">
    <property type="entry name" value="HFD_H2B"/>
    <property type="match status" value="1"/>
</dbReference>
<dbReference type="FunFam" id="1.10.20.10:FF:000014">
    <property type="entry name" value="Histone H2B"/>
    <property type="match status" value="1"/>
</dbReference>
<dbReference type="Gene3D" id="1.10.20.10">
    <property type="entry name" value="Histone, subunit A"/>
    <property type="match status" value="1"/>
</dbReference>
<dbReference type="InterPro" id="IPR009072">
    <property type="entry name" value="Histone-fold"/>
</dbReference>
<dbReference type="InterPro" id="IPR007125">
    <property type="entry name" value="Histone_H2A/H2B/H3"/>
</dbReference>
<dbReference type="InterPro" id="IPR000558">
    <property type="entry name" value="Histone_H2B"/>
</dbReference>
<dbReference type="InterPro" id="IPR055333">
    <property type="entry name" value="HISTONE_H2B_site"/>
</dbReference>
<dbReference type="PANTHER" id="PTHR23428">
    <property type="entry name" value="HISTONE H2B"/>
    <property type="match status" value="1"/>
</dbReference>
<dbReference type="Pfam" id="PF00125">
    <property type="entry name" value="Histone"/>
    <property type="match status" value="1"/>
</dbReference>
<dbReference type="PRINTS" id="PR00621">
    <property type="entry name" value="HISTONEH2B"/>
</dbReference>
<dbReference type="SMART" id="SM00427">
    <property type="entry name" value="H2B"/>
    <property type="match status" value="1"/>
</dbReference>
<dbReference type="SUPFAM" id="SSF47113">
    <property type="entry name" value="Histone-fold"/>
    <property type="match status" value="1"/>
</dbReference>
<dbReference type="PROSITE" id="PS00357">
    <property type="entry name" value="HISTONE_H2B"/>
    <property type="match status" value="1"/>
</dbReference>